<feature type="signal peptide" evidence="2">
    <location>
        <begin position="1"/>
        <end position="21"/>
    </location>
</feature>
<feature type="chain" id="PRO_0000448326" description="Ulvan lyase">
    <location>
        <begin position="22"/>
        <end position="472"/>
    </location>
</feature>
<feature type="active site" description="Proton donor" evidence="1">
    <location>
        <position position="110"/>
    </location>
</feature>
<feature type="active site" description="Proton acceptor" evidence="1">
    <location>
        <position position="175"/>
    </location>
</feature>
<feature type="binding site" evidence="1">
    <location>
        <position position="46"/>
    </location>
    <ligand>
        <name>substrate</name>
    </ligand>
</feature>
<feature type="binding site" evidence="1">
    <location>
        <position position="109"/>
    </location>
    <ligand>
        <name>substrate</name>
    </ligand>
</feature>
<feature type="binding site" evidence="1">
    <location>
        <position position="112"/>
    </location>
    <ligand>
        <name>substrate</name>
    </ligand>
</feature>
<feature type="binding site" evidence="1">
    <location>
        <position position="130"/>
    </location>
    <ligand>
        <name>substrate</name>
    </ligand>
</feature>
<feature type="binding site" evidence="1">
    <location>
        <position position="191"/>
    </location>
    <ligand>
        <name>substrate</name>
    </ligand>
</feature>
<feature type="binding site" evidence="1">
    <location>
        <position position="195"/>
    </location>
    <ligand>
        <name>substrate</name>
    </ligand>
</feature>
<feature type="binding site" evidence="1">
    <location>
        <position position="195"/>
    </location>
    <ligand>
        <name>Zn(2+)</name>
        <dbReference type="ChEBI" id="CHEBI:29105"/>
        <note>structural</note>
    </ligand>
</feature>
<feature type="binding site" evidence="1">
    <location>
        <position position="233"/>
    </location>
    <ligand>
        <name>substrate</name>
    </ligand>
</feature>
<feature type="binding site" evidence="1">
    <location>
        <position position="251"/>
    </location>
    <ligand>
        <name>Zn(2+)</name>
        <dbReference type="ChEBI" id="CHEBI:29105"/>
        <note>structural</note>
    </ligand>
</feature>
<feature type="binding site" evidence="1">
    <location>
        <position position="253"/>
    </location>
    <ligand>
        <name>Zn(2+)</name>
        <dbReference type="ChEBI" id="CHEBI:29105"/>
        <note>structural</note>
    </ligand>
</feature>
<feature type="binding site" evidence="1">
    <location>
        <position position="265"/>
    </location>
    <ligand>
        <name>substrate</name>
    </ligand>
</feature>
<feature type="binding site" evidence="1">
    <location>
        <position position="265"/>
    </location>
    <ligand>
        <name>Zn(2+)</name>
        <dbReference type="ChEBI" id="CHEBI:29105"/>
        <note>structural</note>
    </ligand>
</feature>
<feature type="site" description="Neutralizes the sugar carboxylate group at subsite +1" evidence="1">
    <location>
        <position position="191"/>
    </location>
</feature>
<organism>
    <name type="scientific">Nonlabens ulvanivorans</name>
    <name type="common">Persicivirga ulvanivorans</name>
    <dbReference type="NCBI Taxonomy" id="906888"/>
    <lineage>
        <taxon>Bacteria</taxon>
        <taxon>Pseudomonadati</taxon>
        <taxon>Bacteroidota</taxon>
        <taxon>Flavobacteriia</taxon>
        <taxon>Flavobacteriales</taxon>
        <taxon>Flavobacteriaceae</taxon>
        <taxon>Nonlabens</taxon>
    </lineage>
</organism>
<gene>
    <name type="ORF">IL45_03835</name>
    <name type="ORF">NLR_492</name>
</gene>
<evidence type="ECO:0000250" key="1">
    <source>
        <dbReference type="UniProtKB" id="A0A1W2VMZ5"/>
    </source>
</evidence>
<evidence type="ECO:0000255" key="2"/>
<evidence type="ECO:0000269" key="3">
    <source ref="2"/>
</evidence>
<evidence type="ECO:0000305" key="4"/>
<sequence length="472" mass="53600">MIIKQYLLKISLCVLLLGCDSAKKEISKNENSKTEVDYFADNGFGNAVALVQHPSGVYHNGITYVAYQGPLEDPYVASYNHETKEWKGPFKAGISEMGKDPSRKKKIDNHGKPALLIDNAGYVHIAFGGHGGMRHHGENTLGNYSYGKNLHAVSKKPYDISEWETRDNVSLFGTYSQFIKMDNGDIYLFYRHGAHRSDWVYQKSMDNGVTFSEPVSFLKHKRRTNIEAEDSWYPWVSRGNADDIIVAFDYHICRDNVNAQDARGHIPERHNVYYMVFDTKNGQWKNVKNERLQMPLTKEMADEKTLVRSIPNDWTFQGITDVDPDGNPHVAVLVGPDINARRSGPKRLQHFRWDGQQWLKSNTANLPRGDGDLEVTSATEVSIYLENKTSNDVGEISRWDSFNGGESFQKSKVFLQRENSGFVISSLIDNPHPDARIIVAEKEEGTDFRKMYLLGDNGPIKRSKKEAQVLND</sequence>
<dbReference type="EC" id="4.2.2.-" evidence="3"/>
<dbReference type="EMBL" id="JPJI01000023">
    <property type="protein sequence ID" value="KEZ94292.1"/>
    <property type="molecule type" value="Genomic_DNA"/>
</dbReference>
<dbReference type="RefSeq" id="WP_036580476.1">
    <property type="nucleotide sequence ID" value="NZ_JPJI01000023.1"/>
</dbReference>
<dbReference type="SMR" id="A0A084JZA8"/>
<dbReference type="OrthoDB" id="183671at2"/>
<dbReference type="Proteomes" id="UP000028531">
    <property type="component" value="Unassembled WGS sequence"/>
</dbReference>
<dbReference type="GO" id="GO:0016829">
    <property type="term" value="F:lyase activity"/>
    <property type="evidence" value="ECO:0007669"/>
    <property type="project" value="UniProtKB-KW"/>
</dbReference>
<dbReference type="GO" id="GO:0046872">
    <property type="term" value="F:metal ion binding"/>
    <property type="evidence" value="ECO:0007669"/>
    <property type="project" value="UniProtKB-KW"/>
</dbReference>
<dbReference type="InterPro" id="IPR036278">
    <property type="entry name" value="Sialidase_sf"/>
</dbReference>
<dbReference type="Pfam" id="PF15892">
    <property type="entry name" value="BNR_4"/>
    <property type="match status" value="1"/>
</dbReference>
<dbReference type="SUPFAM" id="SSF50939">
    <property type="entry name" value="Sialidases"/>
    <property type="match status" value="1"/>
</dbReference>
<keyword id="KW-0456">Lyase</keyword>
<keyword id="KW-0479">Metal-binding</keyword>
<keyword id="KW-0732">Signal</keyword>
<keyword id="KW-0862">Zinc</keyword>
<reference key="1">
    <citation type="journal article" date="2014" name="Genome Announc.">
        <title>Draft genome sequence of Nonlabens ulvanivorans, an ulvan-degrading bacterium.</title>
        <authorList>
            <person name="Kopel M."/>
            <person name="Helbert W."/>
            <person name="Henrissat B."/>
            <person name="Doniger T."/>
            <person name="Banin E."/>
        </authorList>
    </citation>
    <scope>NUCLEOTIDE SEQUENCE [LARGE SCALE GENOMIC DNA]</scope>
    <source>
        <strain>DSM 22727 / CIP 110082 / PLR</strain>
    </source>
</reference>
<reference key="2">
    <citation type="journal article" date="2017" name="Algal Res.">
        <title>Functional characterization of a novel 'ulvan utilization loci' found in Alteromonas sp. LOR genome.</title>
        <authorList>
            <person name="Foran E."/>
            <person name="Buravenkov V."/>
            <person name="Kopel M."/>
            <person name="Mizrahi N."/>
            <person name="Shoshani S."/>
            <person name="Helbert W."/>
            <person name="Banin E."/>
        </authorList>
    </citation>
    <scope>FUNCTION</scope>
    <scope>CATALYTIC ACTIVITY</scope>
</reference>
<proteinExistence type="evidence at protein level"/>
<accession>A0A084JZA8</accession>
<comment type="function">
    <text evidence="3">Ulvan lyase involved in ulvan degradation. Ulvan is the main polysaccharide component of the Ulvales (green seaweed) cell wall. It is composed of disaccharide building blocks comprising 3-sulfated rhamnose (Rha3S) linked to D-glucuronic acid (GlcA), L-iduronic acid (IduA), or D-xylose (Xyl). Ulvan lyase catalyzes the endolytic cleavage of the glycosidic bond between Rha3S and the uronic acids GlcA or IduA, producing oligosaccharides that have unsaturated 4-deoxy-L-threo-hex-4-enopyranosiduronic acid (deltaUA) at the non-reducing end. This results eventually in the degradation of the ulvan polysaccharide into deltaUA-Rha3S disaccharides and deltaUA-Rha3S-Xyl-Rha3S tetrasaccharides.</text>
</comment>
<comment type="similarity">
    <text evidence="4">Belongs to the polysaccharide lyase 25 family.</text>
</comment>
<name>UL25_NONUL</name>
<protein>
    <recommendedName>
        <fullName>Ulvan lyase</fullName>
        <ecNumber evidence="3">4.2.2.-</ecNumber>
    </recommendedName>
</protein>